<organism>
    <name type="scientific">Idiomarina loihiensis (strain ATCC BAA-735 / DSM 15497 / L2-TR)</name>
    <dbReference type="NCBI Taxonomy" id="283942"/>
    <lineage>
        <taxon>Bacteria</taxon>
        <taxon>Pseudomonadati</taxon>
        <taxon>Pseudomonadota</taxon>
        <taxon>Gammaproteobacteria</taxon>
        <taxon>Alteromonadales</taxon>
        <taxon>Idiomarinaceae</taxon>
        <taxon>Idiomarina</taxon>
    </lineage>
</organism>
<feature type="chain" id="PRO_0000311495" description="Iron-sulfur cluster insertion protein ErpA">
    <location>
        <begin position="1"/>
        <end position="116"/>
    </location>
</feature>
<feature type="binding site" evidence="1">
    <location>
        <position position="44"/>
    </location>
    <ligand>
        <name>iron-sulfur cluster</name>
        <dbReference type="ChEBI" id="CHEBI:30408"/>
    </ligand>
</feature>
<feature type="binding site" evidence="1">
    <location>
        <position position="108"/>
    </location>
    <ligand>
        <name>iron-sulfur cluster</name>
        <dbReference type="ChEBI" id="CHEBI:30408"/>
    </ligand>
</feature>
<feature type="binding site" evidence="1">
    <location>
        <position position="110"/>
    </location>
    <ligand>
        <name>iron-sulfur cluster</name>
        <dbReference type="ChEBI" id="CHEBI:30408"/>
    </ligand>
</feature>
<keyword id="KW-0408">Iron</keyword>
<keyword id="KW-0411">Iron-sulfur</keyword>
<keyword id="KW-0479">Metal-binding</keyword>
<keyword id="KW-1185">Reference proteome</keyword>
<gene>
    <name evidence="1" type="primary">erpA</name>
    <name type="ordered locus">IL2240</name>
</gene>
<reference key="1">
    <citation type="journal article" date="2004" name="Proc. Natl. Acad. Sci. U.S.A.">
        <title>Genome sequence of the deep-sea gamma-proteobacterium Idiomarina loihiensis reveals amino acid fermentation as a source of carbon and energy.</title>
        <authorList>
            <person name="Hou S."/>
            <person name="Saw J.H."/>
            <person name="Lee K.S."/>
            <person name="Freitas T.A."/>
            <person name="Belisle C."/>
            <person name="Kawarabayasi Y."/>
            <person name="Donachie S.P."/>
            <person name="Pikina A."/>
            <person name="Galperin M.Y."/>
            <person name="Koonin E.V."/>
            <person name="Makarova K.S."/>
            <person name="Omelchenko M.V."/>
            <person name="Sorokin A."/>
            <person name="Wolf Y.I."/>
            <person name="Li Q.X."/>
            <person name="Keum Y.S."/>
            <person name="Campbell S."/>
            <person name="Denery J."/>
            <person name="Aizawa S."/>
            <person name="Shibata S."/>
            <person name="Malahoff A."/>
            <person name="Alam M."/>
        </authorList>
    </citation>
    <scope>NUCLEOTIDE SEQUENCE [LARGE SCALE GENOMIC DNA]</scope>
    <source>
        <strain>ATCC BAA-735 / DSM 15497 / L2-TR</strain>
    </source>
</reference>
<sequence>MSSAAEQAMPIEFTEQAASKVGKLIAEEENPNLKLRVYVTGGGCSGFQYGFTFDEKKNPGDMEIEKNGVTLLVDPMSLQYLMGGVVSYEEGLQGSRFFVDNPNATTTCGCGSSFSV</sequence>
<comment type="function">
    <text evidence="1">Required for insertion of 4Fe-4S clusters for at least IspG.</text>
</comment>
<comment type="cofactor">
    <cofactor evidence="1">
        <name>iron-sulfur cluster</name>
        <dbReference type="ChEBI" id="CHEBI:30408"/>
    </cofactor>
    <text evidence="1">Binds 1 iron-sulfur cluster per subunit.</text>
</comment>
<comment type="subunit">
    <text evidence="1">Homodimer.</text>
</comment>
<comment type="similarity">
    <text evidence="1">Belongs to the HesB/IscA family.</text>
</comment>
<dbReference type="EMBL" id="AE017340">
    <property type="protein sequence ID" value="AAV83072.1"/>
    <property type="molecule type" value="Genomic_DNA"/>
</dbReference>
<dbReference type="RefSeq" id="WP_011235467.1">
    <property type="nucleotide sequence ID" value="NC_006512.1"/>
</dbReference>
<dbReference type="SMR" id="Q5QVQ4"/>
<dbReference type="STRING" id="283942.IL2240"/>
<dbReference type="GeneID" id="41337429"/>
<dbReference type="KEGG" id="ilo:IL2240"/>
<dbReference type="eggNOG" id="COG0316">
    <property type="taxonomic scope" value="Bacteria"/>
</dbReference>
<dbReference type="HOGENOM" id="CLU_069054_5_3_6"/>
<dbReference type="OrthoDB" id="9801228at2"/>
<dbReference type="Proteomes" id="UP000001171">
    <property type="component" value="Chromosome"/>
</dbReference>
<dbReference type="GO" id="GO:0005829">
    <property type="term" value="C:cytosol"/>
    <property type="evidence" value="ECO:0007669"/>
    <property type="project" value="TreeGrafter"/>
</dbReference>
<dbReference type="GO" id="GO:0051537">
    <property type="term" value="F:2 iron, 2 sulfur cluster binding"/>
    <property type="evidence" value="ECO:0007669"/>
    <property type="project" value="UniProtKB-ARBA"/>
</dbReference>
<dbReference type="GO" id="GO:0051539">
    <property type="term" value="F:4 iron, 4 sulfur cluster binding"/>
    <property type="evidence" value="ECO:0007669"/>
    <property type="project" value="TreeGrafter"/>
</dbReference>
<dbReference type="GO" id="GO:0005506">
    <property type="term" value="F:iron ion binding"/>
    <property type="evidence" value="ECO:0007669"/>
    <property type="project" value="UniProtKB-UniRule"/>
</dbReference>
<dbReference type="GO" id="GO:0016226">
    <property type="term" value="P:iron-sulfur cluster assembly"/>
    <property type="evidence" value="ECO:0007669"/>
    <property type="project" value="UniProtKB-UniRule"/>
</dbReference>
<dbReference type="FunFam" id="2.60.300.12:FF:000002">
    <property type="entry name" value="Iron-sulfur cluster insertion protein ErpA"/>
    <property type="match status" value="1"/>
</dbReference>
<dbReference type="Gene3D" id="2.60.300.12">
    <property type="entry name" value="HesB-like domain"/>
    <property type="match status" value="1"/>
</dbReference>
<dbReference type="HAMAP" id="MF_01380">
    <property type="entry name" value="Fe_S_insert_ErpA"/>
    <property type="match status" value="1"/>
</dbReference>
<dbReference type="InterPro" id="IPR000361">
    <property type="entry name" value="FeS_biogenesis"/>
</dbReference>
<dbReference type="InterPro" id="IPR016092">
    <property type="entry name" value="FeS_cluster_insertion"/>
</dbReference>
<dbReference type="InterPro" id="IPR017870">
    <property type="entry name" value="FeS_cluster_insertion_CS"/>
</dbReference>
<dbReference type="InterPro" id="IPR023063">
    <property type="entry name" value="FeS_cluster_insertion_RrpA"/>
</dbReference>
<dbReference type="InterPro" id="IPR035903">
    <property type="entry name" value="HesB-like_dom_sf"/>
</dbReference>
<dbReference type="NCBIfam" id="TIGR00049">
    <property type="entry name" value="iron-sulfur cluster assembly accessory protein"/>
    <property type="match status" value="1"/>
</dbReference>
<dbReference type="NCBIfam" id="NF010147">
    <property type="entry name" value="PRK13623.1"/>
    <property type="match status" value="1"/>
</dbReference>
<dbReference type="PANTHER" id="PTHR43011">
    <property type="entry name" value="IRON-SULFUR CLUSTER ASSEMBLY 2 HOMOLOG, MITOCHONDRIAL"/>
    <property type="match status" value="1"/>
</dbReference>
<dbReference type="PANTHER" id="PTHR43011:SF1">
    <property type="entry name" value="IRON-SULFUR CLUSTER ASSEMBLY 2 HOMOLOG, MITOCHONDRIAL"/>
    <property type="match status" value="1"/>
</dbReference>
<dbReference type="Pfam" id="PF01521">
    <property type="entry name" value="Fe-S_biosyn"/>
    <property type="match status" value="1"/>
</dbReference>
<dbReference type="SUPFAM" id="SSF89360">
    <property type="entry name" value="HesB-like domain"/>
    <property type="match status" value="1"/>
</dbReference>
<dbReference type="PROSITE" id="PS01152">
    <property type="entry name" value="HESB"/>
    <property type="match status" value="1"/>
</dbReference>
<evidence type="ECO:0000255" key="1">
    <source>
        <dbReference type="HAMAP-Rule" id="MF_01380"/>
    </source>
</evidence>
<accession>Q5QVQ4</accession>
<name>ERPA_IDILO</name>
<proteinExistence type="inferred from homology"/>
<protein>
    <recommendedName>
        <fullName evidence="1">Iron-sulfur cluster insertion protein ErpA</fullName>
    </recommendedName>
</protein>